<sequence>MNNRVGTIGNASPLTADAHPMIDPFGRAVTYLRVSVTDRCDFRCTYCMAENMTFLPKKDLLTLEELDRLCSAFIAKGVSKIRLTGGEPLVRKNIMYLVRKLGAKIGSGLDELTLTTNGSQLSRHAAELHDCGVRRINVSLDTLDPDKFRKITRWGDFDKVMEGIDAAQKAGIKIKLNAVALKNFNDAEIPDLLRFAHGRGMDLTVIETMPMGEIEEDRTDQYLPLSELRADLERQFTLTDIDYQTGGPARYVRVSETGGRLGFITPMTHNFCESCNRVRLTCTGTLYMCLGQNDAADLRAALRATEDDALLHAAIDEAITRKPKGHDFIIDRTHNRPAVARHMSVTGG</sequence>
<proteinExistence type="inferred from homology"/>
<gene>
    <name evidence="1" type="primary">moaA</name>
    <name type="ordered locus">RHE_CH02392</name>
</gene>
<name>MOAA_RHIEC</name>
<organism>
    <name type="scientific">Rhizobium etli (strain ATCC 51251 / DSM 11541 / JCM 21823 / NBRC 15573 / CFN 42)</name>
    <dbReference type="NCBI Taxonomy" id="347834"/>
    <lineage>
        <taxon>Bacteria</taxon>
        <taxon>Pseudomonadati</taxon>
        <taxon>Pseudomonadota</taxon>
        <taxon>Alphaproteobacteria</taxon>
        <taxon>Hyphomicrobiales</taxon>
        <taxon>Rhizobiaceae</taxon>
        <taxon>Rhizobium/Agrobacterium group</taxon>
        <taxon>Rhizobium</taxon>
    </lineage>
</organism>
<accession>Q2K7L4</accession>
<feature type="chain" id="PRO_1000054217" description="GTP 3',8-cyclase">
    <location>
        <begin position="1"/>
        <end position="348"/>
    </location>
</feature>
<feature type="domain" description="Radical SAM core" evidence="2">
    <location>
        <begin position="24"/>
        <end position="248"/>
    </location>
</feature>
<feature type="binding site" evidence="1">
    <location>
        <position position="33"/>
    </location>
    <ligand>
        <name>GTP</name>
        <dbReference type="ChEBI" id="CHEBI:37565"/>
    </ligand>
</feature>
<feature type="binding site" evidence="1">
    <location>
        <position position="40"/>
    </location>
    <ligand>
        <name>[4Fe-4S] cluster</name>
        <dbReference type="ChEBI" id="CHEBI:49883"/>
        <label>1</label>
        <note>4Fe-4S-S-AdoMet</note>
    </ligand>
</feature>
<feature type="binding site" evidence="1">
    <location>
        <position position="44"/>
    </location>
    <ligand>
        <name>[4Fe-4S] cluster</name>
        <dbReference type="ChEBI" id="CHEBI:49883"/>
        <label>1</label>
        <note>4Fe-4S-S-AdoMet</note>
    </ligand>
</feature>
<feature type="binding site" evidence="1">
    <location>
        <position position="46"/>
    </location>
    <ligand>
        <name>S-adenosyl-L-methionine</name>
        <dbReference type="ChEBI" id="CHEBI:59789"/>
    </ligand>
</feature>
<feature type="binding site" evidence="1">
    <location>
        <position position="47"/>
    </location>
    <ligand>
        <name>[4Fe-4S] cluster</name>
        <dbReference type="ChEBI" id="CHEBI:49883"/>
        <label>1</label>
        <note>4Fe-4S-S-AdoMet</note>
    </ligand>
</feature>
<feature type="binding site" evidence="1">
    <location>
        <position position="82"/>
    </location>
    <ligand>
        <name>GTP</name>
        <dbReference type="ChEBI" id="CHEBI:37565"/>
    </ligand>
</feature>
<feature type="binding site" evidence="1">
    <location>
        <position position="86"/>
    </location>
    <ligand>
        <name>S-adenosyl-L-methionine</name>
        <dbReference type="ChEBI" id="CHEBI:59789"/>
    </ligand>
</feature>
<feature type="binding site" evidence="1">
    <location>
        <position position="115"/>
    </location>
    <ligand>
        <name>GTP</name>
        <dbReference type="ChEBI" id="CHEBI:37565"/>
    </ligand>
</feature>
<feature type="binding site" evidence="1">
    <location>
        <position position="139"/>
    </location>
    <ligand>
        <name>S-adenosyl-L-methionine</name>
        <dbReference type="ChEBI" id="CHEBI:59789"/>
    </ligand>
</feature>
<feature type="binding site" evidence="1">
    <location>
        <position position="175"/>
    </location>
    <ligand>
        <name>GTP</name>
        <dbReference type="ChEBI" id="CHEBI:37565"/>
    </ligand>
</feature>
<feature type="binding site" evidence="1">
    <location>
        <position position="209"/>
    </location>
    <ligand>
        <name>S-adenosyl-L-methionine</name>
        <dbReference type="ChEBI" id="CHEBI:59789"/>
    </ligand>
</feature>
<feature type="binding site" evidence="1">
    <location>
        <position position="272"/>
    </location>
    <ligand>
        <name>[4Fe-4S] cluster</name>
        <dbReference type="ChEBI" id="CHEBI:49883"/>
        <label>2</label>
        <note>4Fe-4S-substrate</note>
    </ligand>
</feature>
<feature type="binding site" evidence="1">
    <location>
        <position position="275"/>
    </location>
    <ligand>
        <name>[4Fe-4S] cluster</name>
        <dbReference type="ChEBI" id="CHEBI:49883"/>
        <label>2</label>
        <note>4Fe-4S-substrate</note>
    </ligand>
</feature>
<feature type="binding site" evidence="1">
    <location>
        <begin position="277"/>
        <end position="279"/>
    </location>
    <ligand>
        <name>GTP</name>
        <dbReference type="ChEBI" id="CHEBI:37565"/>
    </ligand>
</feature>
<feature type="binding site" evidence="1">
    <location>
        <position position="289"/>
    </location>
    <ligand>
        <name>[4Fe-4S] cluster</name>
        <dbReference type="ChEBI" id="CHEBI:49883"/>
        <label>2</label>
        <note>4Fe-4S-substrate</note>
    </ligand>
</feature>
<protein>
    <recommendedName>
        <fullName evidence="1">GTP 3',8-cyclase</fullName>
        <ecNumber evidence="1">4.1.99.22</ecNumber>
    </recommendedName>
    <alternativeName>
        <fullName evidence="1">Molybdenum cofactor biosynthesis protein A</fullName>
    </alternativeName>
</protein>
<keyword id="KW-0004">4Fe-4S</keyword>
<keyword id="KW-0342">GTP-binding</keyword>
<keyword id="KW-0408">Iron</keyword>
<keyword id="KW-0411">Iron-sulfur</keyword>
<keyword id="KW-0456">Lyase</keyword>
<keyword id="KW-0479">Metal-binding</keyword>
<keyword id="KW-0501">Molybdenum cofactor biosynthesis</keyword>
<keyword id="KW-0547">Nucleotide-binding</keyword>
<keyword id="KW-1185">Reference proteome</keyword>
<keyword id="KW-0949">S-adenosyl-L-methionine</keyword>
<evidence type="ECO:0000255" key="1">
    <source>
        <dbReference type="HAMAP-Rule" id="MF_01225"/>
    </source>
</evidence>
<evidence type="ECO:0000255" key="2">
    <source>
        <dbReference type="PROSITE-ProRule" id="PRU01266"/>
    </source>
</evidence>
<comment type="function">
    <text evidence="1">Catalyzes the cyclization of GTP to (8S)-3',8-cyclo-7,8-dihydroguanosine 5'-triphosphate.</text>
</comment>
<comment type="catalytic activity">
    <reaction evidence="1">
        <text>GTP + AH2 + S-adenosyl-L-methionine = (8S)-3',8-cyclo-7,8-dihydroguanosine 5'-triphosphate + 5'-deoxyadenosine + L-methionine + A + H(+)</text>
        <dbReference type="Rhea" id="RHEA:49576"/>
        <dbReference type="ChEBI" id="CHEBI:13193"/>
        <dbReference type="ChEBI" id="CHEBI:15378"/>
        <dbReference type="ChEBI" id="CHEBI:17319"/>
        <dbReference type="ChEBI" id="CHEBI:17499"/>
        <dbReference type="ChEBI" id="CHEBI:37565"/>
        <dbReference type="ChEBI" id="CHEBI:57844"/>
        <dbReference type="ChEBI" id="CHEBI:59789"/>
        <dbReference type="ChEBI" id="CHEBI:131766"/>
        <dbReference type="EC" id="4.1.99.22"/>
    </reaction>
</comment>
<comment type="cofactor">
    <cofactor evidence="1">
        <name>[4Fe-4S] cluster</name>
        <dbReference type="ChEBI" id="CHEBI:49883"/>
    </cofactor>
    <text evidence="1">Binds 2 [4Fe-4S] clusters. Binds 1 [4Fe-4S] cluster coordinated with 3 cysteines and an exchangeable S-adenosyl-L-methionine and 1 [4Fe-4S] cluster coordinated with 3 cysteines and the GTP-derived substrate.</text>
</comment>
<comment type="pathway">
    <text evidence="1">Cofactor biosynthesis; molybdopterin biosynthesis.</text>
</comment>
<comment type="subunit">
    <text evidence="1">Monomer and homodimer.</text>
</comment>
<comment type="similarity">
    <text evidence="1">Belongs to the radical SAM superfamily. MoaA family.</text>
</comment>
<dbReference type="EC" id="4.1.99.22" evidence="1"/>
<dbReference type="EMBL" id="CP000133">
    <property type="protein sequence ID" value="ABC91172.1"/>
    <property type="molecule type" value="Genomic_DNA"/>
</dbReference>
<dbReference type="RefSeq" id="WP_011425651.1">
    <property type="nucleotide sequence ID" value="NC_007761.1"/>
</dbReference>
<dbReference type="SMR" id="Q2K7L4"/>
<dbReference type="KEGG" id="ret:RHE_CH02392"/>
<dbReference type="eggNOG" id="COG2896">
    <property type="taxonomic scope" value="Bacteria"/>
</dbReference>
<dbReference type="HOGENOM" id="CLU_009273_0_1_5"/>
<dbReference type="OrthoDB" id="9763993at2"/>
<dbReference type="UniPathway" id="UPA00344"/>
<dbReference type="Proteomes" id="UP000001936">
    <property type="component" value="Chromosome"/>
</dbReference>
<dbReference type="GO" id="GO:0051539">
    <property type="term" value="F:4 iron, 4 sulfur cluster binding"/>
    <property type="evidence" value="ECO:0007669"/>
    <property type="project" value="UniProtKB-UniRule"/>
</dbReference>
<dbReference type="GO" id="GO:0061799">
    <property type="term" value="F:cyclic pyranopterin monophosphate synthase activity"/>
    <property type="evidence" value="ECO:0007669"/>
    <property type="project" value="TreeGrafter"/>
</dbReference>
<dbReference type="GO" id="GO:0061798">
    <property type="term" value="F:GTP 3',8'-cyclase activity"/>
    <property type="evidence" value="ECO:0007669"/>
    <property type="project" value="UniProtKB-UniRule"/>
</dbReference>
<dbReference type="GO" id="GO:0005525">
    <property type="term" value="F:GTP binding"/>
    <property type="evidence" value="ECO:0007669"/>
    <property type="project" value="UniProtKB-UniRule"/>
</dbReference>
<dbReference type="GO" id="GO:0046872">
    <property type="term" value="F:metal ion binding"/>
    <property type="evidence" value="ECO:0007669"/>
    <property type="project" value="UniProtKB-KW"/>
</dbReference>
<dbReference type="GO" id="GO:1904047">
    <property type="term" value="F:S-adenosyl-L-methionine binding"/>
    <property type="evidence" value="ECO:0007669"/>
    <property type="project" value="UniProtKB-UniRule"/>
</dbReference>
<dbReference type="GO" id="GO:0006777">
    <property type="term" value="P:Mo-molybdopterin cofactor biosynthetic process"/>
    <property type="evidence" value="ECO:0007669"/>
    <property type="project" value="UniProtKB-UniRule"/>
</dbReference>
<dbReference type="CDD" id="cd01335">
    <property type="entry name" value="Radical_SAM"/>
    <property type="match status" value="1"/>
</dbReference>
<dbReference type="CDD" id="cd21117">
    <property type="entry name" value="Twitch_MoaA"/>
    <property type="match status" value="1"/>
</dbReference>
<dbReference type="Gene3D" id="3.20.20.70">
    <property type="entry name" value="Aldolase class I"/>
    <property type="match status" value="1"/>
</dbReference>
<dbReference type="HAMAP" id="MF_01225_B">
    <property type="entry name" value="MoaA_B"/>
    <property type="match status" value="1"/>
</dbReference>
<dbReference type="InterPro" id="IPR013785">
    <property type="entry name" value="Aldolase_TIM"/>
</dbReference>
<dbReference type="InterPro" id="IPR006638">
    <property type="entry name" value="Elp3/MiaA/NifB-like_rSAM"/>
</dbReference>
<dbReference type="InterPro" id="IPR013483">
    <property type="entry name" value="MoaA"/>
</dbReference>
<dbReference type="InterPro" id="IPR000385">
    <property type="entry name" value="MoaA_NifB_PqqE_Fe-S-bd_CS"/>
</dbReference>
<dbReference type="InterPro" id="IPR010505">
    <property type="entry name" value="MoaA_twitch"/>
</dbReference>
<dbReference type="InterPro" id="IPR050105">
    <property type="entry name" value="MoCo_biosynth_MoaA/MoaC"/>
</dbReference>
<dbReference type="InterPro" id="IPR007197">
    <property type="entry name" value="rSAM"/>
</dbReference>
<dbReference type="NCBIfam" id="TIGR02666">
    <property type="entry name" value="moaA"/>
    <property type="match status" value="1"/>
</dbReference>
<dbReference type="PANTHER" id="PTHR22960:SF0">
    <property type="entry name" value="MOLYBDENUM COFACTOR BIOSYNTHESIS PROTEIN 1"/>
    <property type="match status" value="1"/>
</dbReference>
<dbReference type="PANTHER" id="PTHR22960">
    <property type="entry name" value="MOLYBDOPTERIN COFACTOR SYNTHESIS PROTEIN A"/>
    <property type="match status" value="1"/>
</dbReference>
<dbReference type="Pfam" id="PF13353">
    <property type="entry name" value="Fer4_12"/>
    <property type="match status" value="1"/>
</dbReference>
<dbReference type="Pfam" id="PF06463">
    <property type="entry name" value="Mob_synth_C"/>
    <property type="match status" value="1"/>
</dbReference>
<dbReference type="Pfam" id="PF04055">
    <property type="entry name" value="Radical_SAM"/>
    <property type="match status" value="1"/>
</dbReference>
<dbReference type="SFLD" id="SFLDG01383">
    <property type="entry name" value="cyclic_pyranopterin_phosphate"/>
    <property type="match status" value="1"/>
</dbReference>
<dbReference type="SFLD" id="SFLDS00029">
    <property type="entry name" value="Radical_SAM"/>
    <property type="match status" value="1"/>
</dbReference>
<dbReference type="SMART" id="SM00729">
    <property type="entry name" value="Elp3"/>
    <property type="match status" value="1"/>
</dbReference>
<dbReference type="SUPFAM" id="SSF102114">
    <property type="entry name" value="Radical SAM enzymes"/>
    <property type="match status" value="1"/>
</dbReference>
<dbReference type="PROSITE" id="PS01305">
    <property type="entry name" value="MOAA_NIFB_PQQE"/>
    <property type="match status" value="1"/>
</dbReference>
<dbReference type="PROSITE" id="PS51918">
    <property type="entry name" value="RADICAL_SAM"/>
    <property type="match status" value="1"/>
</dbReference>
<reference key="1">
    <citation type="journal article" date="2006" name="Proc. Natl. Acad. Sci. U.S.A.">
        <title>The partitioned Rhizobium etli genome: genetic and metabolic redundancy in seven interacting replicons.</title>
        <authorList>
            <person name="Gonzalez V."/>
            <person name="Santamaria R.I."/>
            <person name="Bustos P."/>
            <person name="Hernandez-Gonzalez I."/>
            <person name="Medrano-Soto A."/>
            <person name="Moreno-Hagelsieb G."/>
            <person name="Janga S.C."/>
            <person name="Ramirez M.A."/>
            <person name="Jimenez-Jacinto V."/>
            <person name="Collado-Vides J."/>
            <person name="Davila G."/>
        </authorList>
    </citation>
    <scope>NUCLEOTIDE SEQUENCE [LARGE SCALE GENOMIC DNA]</scope>
    <source>
        <strain>ATCC 51251 / DSM 11541 / JCM 21823 / NBRC 15573 / CFN 42</strain>
    </source>
</reference>